<feature type="chain" id="PRO_1000193406" description="DNA repair protein RecO">
    <location>
        <begin position="1"/>
        <end position="243"/>
    </location>
</feature>
<dbReference type="EMBL" id="CP000747">
    <property type="protein sequence ID" value="ACG78278.1"/>
    <property type="molecule type" value="Genomic_DNA"/>
</dbReference>
<dbReference type="RefSeq" id="WP_012522420.1">
    <property type="nucleotide sequence ID" value="NC_011144.1"/>
</dbReference>
<dbReference type="SMR" id="B4RCU1"/>
<dbReference type="STRING" id="450851.PHZ_c1867"/>
<dbReference type="KEGG" id="pzu:PHZ_c1867"/>
<dbReference type="eggNOG" id="COG1381">
    <property type="taxonomic scope" value="Bacteria"/>
</dbReference>
<dbReference type="HOGENOM" id="CLU_086029_0_0_5"/>
<dbReference type="OrthoDB" id="9804792at2"/>
<dbReference type="Proteomes" id="UP000001868">
    <property type="component" value="Chromosome"/>
</dbReference>
<dbReference type="GO" id="GO:0043590">
    <property type="term" value="C:bacterial nucleoid"/>
    <property type="evidence" value="ECO:0007669"/>
    <property type="project" value="TreeGrafter"/>
</dbReference>
<dbReference type="GO" id="GO:0006310">
    <property type="term" value="P:DNA recombination"/>
    <property type="evidence" value="ECO:0007669"/>
    <property type="project" value="UniProtKB-UniRule"/>
</dbReference>
<dbReference type="GO" id="GO:0006302">
    <property type="term" value="P:double-strand break repair"/>
    <property type="evidence" value="ECO:0007669"/>
    <property type="project" value="TreeGrafter"/>
</dbReference>
<dbReference type="Gene3D" id="2.40.50.140">
    <property type="entry name" value="Nucleic acid-binding proteins"/>
    <property type="match status" value="1"/>
</dbReference>
<dbReference type="Gene3D" id="1.20.1440.120">
    <property type="entry name" value="Recombination protein O, C-terminal domain"/>
    <property type="match status" value="1"/>
</dbReference>
<dbReference type="HAMAP" id="MF_00201">
    <property type="entry name" value="RecO"/>
    <property type="match status" value="1"/>
</dbReference>
<dbReference type="InterPro" id="IPR037278">
    <property type="entry name" value="ARFGAP/RecO"/>
</dbReference>
<dbReference type="InterPro" id="IPR022572">
    <property type="entry name" value="DNA_rep/recomb_RecO_N"/>
</dbReference>
<dbReference type="InterPro" id="IPR012340">
    <property type="entry name" value="NA-bd_OB-fold"/>
</dbReference>
<dbReference type="InterPro" id="IPR003717">
    <property type="entry name" value="RecO"/>
</dbReference>
<dbReference type="InterPro" id="IPR042242">
    <property type="entry name" value="RecO_C"/>
</dbReference>
<dbReference type="NCBIfam" id="TIGR00613">
    <property type="entry name" value="reco"/>
    <property type="match status" value="1"/>
</dbReference>
<dbReference type="PANTHER" id="PTHR33991">
    <property type="entry name" value="DNA REPAIR PROTEIN RECO"/>
    <property type="match status" value="1"/>
</dbReference>
<dbReference type="PANTHER" id="PTHR33991:SF1">
    <property type="entry name" value="DNA REPAIR PROTEIN RECO"/>
    <property type="match status" value="1"/>
</dbReference>
<dbReference type="Pfam" id="PF02565">
    <property type="entry name" value="RecO_C"/>
    <property type="match status" value="1"/>
</dbReference>
<dbReference type="Pfam" id="PF11967">
    <property type="entry name" value="RecO_N"/>
    <property type="match status" value="1"/>
</dbReference>
<dbReference type="SUPFAM" id="SSF57863">
    <property type="entry name" value="ArfGap/RecO-like zinc finger"/>
    <property type="match status" value="1"/>
</dbReference>
<dbReference type="SUPFAM" id="SSF50249">
    <property type="entry name" value="Nucleic acid-binding proteins"/>
    <property type="match status" value="1"/>
</dbReference>
<comment type="function">
    <text evidence="1">Involved in DNA repair and RecF pathway recombination.</text>
</comment>
<comment type="similarity">
    <text evidence="1">Belongs to the RecO family.</text>
</comment>
<keyword id="KW-0227">DNA damage</keyword>
<keyword id="KW-0233">DNA recombination</keyword>
<keyword id="KW-0234">DNA repair</keyword>
<keyword id="KW-1185">Reference proteome</keyword>
<protein>
    <recommendedName>
        <fullName evidence="1">DNA repair protein RecO</fullName>
    </recommendedName>
    <alternativeName>
        <fullName evidence="1">Recombination protein O</fullName>
    </alternativeName>
</protein>
<gene>
    <name evidence="1" type="primary">recO</name>
    <name type="ordered locus">PHZ_c1867</name>
</gene>
<accession>B4RCU1</accession>
<proteinExistence type="inferred from homology"/>
<sequence>MEFEDDAFVLAARAHGETGAIVELLTSAHGRYAAHVAGGASRKVRPFLQPGARVIARYRARVSDQLGSAAIEPVGEGPAALFDDPLALSGLSAAAAVAAGALPEREPHPGAFLAFEALTGALTHPDVWPAVFVRFEAGLLQDLGFGLDLSKCAATGITDDLVWVSPRTGRAVSRQAGEPYKDRLLALPPFLLSAQGGLRAGDVAAGLALTGHFLEAFIFGPLNRPLPPARLWLLDRLSEAGRL</sequence>
<reference key="1">
    <citation type="journal article" date="2008" name="BMC Genomics">
        <title>Complete genome of Phenylobacterium zucineum - a novel facultative intracellular bacterium isolated from human erythroleukemia cell line K562.</title>
        <authorList>
            <person name="Luo Y."/>
            <person name="Xu X."/>
            <person name="Ding Z."/>
            <person name="Liu Z."/>
            <person name="Zhang B."/>
            <person name="Yan Z."/>
            <person name="Sun J."/>
            <person name="Hu S."/>
            <person name="Hu X."/>
        </authorList>
    </citation>
    <scope>NUCLEOTIDE SEQUENCE [LARGE SCALE GENOMIC DNA]</scope>
    <source>
        <strain>HLK1</strain>
    </source>
</reference>
<evidence type="ECO:0000255" key="1">
    <source>
        <dbReference type="HAMAP-Rule" id="MF_00201"/>
    </source>
</evidence>
<name>RECO_PHEZH</name>
<organism>
    <name type="scientific">Phenylobacterium zucineum (strain HLK1)</name>
    <dbReference type="NCBI Taxonomy" id="450851"/>
    <lineage>
        <taxon>Bacteria</taxon>
        <taxon>Pseudomonadati</taxon>
        <taxon>Pseudomonadota</taxon>
        <taxon>Alphaproteobacteria</taxon>
        <taxon>Caulobacterales</taxon>
        <taxon>Caulobacteraceae</taxon>
        <taxon>Phenylobacterium</taxon>
    </lineage>
</organism>